<protein>
    <recommendedName>
        <fullName evidence="4 5">Ocellatin-F1</fullName>
        <shortName evidence="4 5">OF1</shortName>
    </recommendedName>
    <alternativeName>
        <fullName evidence="1">Fallaxin</fullName>
    </alternativeName>
</protein>
<comment type="function">
    <text evidence="1 2 3">Antibacterial peptide that inhibits reference strains of both Gram-negative bacteria (E.coli, P.aeruginosa, E.cloacae, K.pneumoniae, and A.actinomycetemcomitans) and Gram-positive bacteria (S.aureus) with relatively low potencies (MIC=25-400 uM) (By similarity) (PubMed:28115922). Shows antifungal activity against C.lusitaniae (MIC=50.25 uM), but no activity against C.albicans (PubMed:28115922). In the presence of an alkaloid (bufotenine), inhibits cellular infection by the rabies virus (PubMed:26635873). The peptide shows very low hemolytic activity against rabbit erythrocytes (By similarity) (PubMed:28115922). The low amphipathicity of alpha-helices demonstrated by wheel projection as well as the low cationicity may explain the low antibacterial and hemolytic potencies (By similarity).</text>
</comment>
<comment type="subcellular location">
    <subcellularLocation>
        <location evidence="2 3">Secreted</location>
    </subcellularLocation>
</comment>
<comment type="tissue specificity">
    <text evidence="7 8">Expressed by the skin glands.</text>
</comment>
<comment type="mass spectrometry"/>
<comment type="mass spectrometry"/>
<comment type="miscellaneous">
    <text evidence="6">The primary structure of this peptide is identical to that of Ocellatin-F1 from Leptodactylus fallax (AC P0DQJ8).</text>
</comment>
<comment type="similarity">
    <text evidence="6">Belongs to the frog skin active peptide (FSAP) family. Ocellatin subfamily.</text>
</comment>
<comment type="online information" name="The antimicrobial peptide database">
    <link uri="https://wangapd3.com/database/query_output.php?ID=00533"/>
</comment>
<dbReference type="PDB" id="5U9S">
    <property type="method" value="NMR"/>
    <property type="chains" value="A=1-25"/>
</dbReference>
<dbReference type="PDB" id="5U9Y">
    <property type="method" value="NMR"/>
    <property type="chains" value="A=1-24"/>
</dbReference>
<dbReference type="PDB" id="5UA8">
    <property type="method" value="NMR"/>
    <property type="chains" value="A=1-25"/>
</dbReference>
<dbReference type="PDBsum" id="5U9S"/>
<dbReference type="PDBsum" id="5U9Y"/>
<dbReference type="PDBsum" id="5UA8"/>
<dbReference type="SMR" id="C0HKF0"/>
<dbReference type="GO" id="GO:0005576">
    <property type="term" value="C:extracellular region"/>
    <property type="evidence" value="ECO:0007669"/>
    <property type="project" value="UniProtKB-SubCell"/>
</dbReference>
<dbReference type="GO" id="GO:0042742">
    <property type="term" value="P:defense response to bacterium"/>
    <property type="evidence" value="ECO:0007669"/>
    <property type="project" value="UniProtKB-KW"/>
</dbReference>
<dbReference type="GO" id="GO:0050832">
    <property type="term" value="P:defense response to fungus"/>
    <property type="evidence" value="ECO:0007669"/>
    <property type="project" value="UniProtKB-KW"/>
</dbReference>
<dbReference type="GO" id="GO:0050688">
    <property type="term" value="P:regulation of defense response to virus"/>
    <property type="evidence" value="ECO:0007669"/>
    <property type="project" value="UniProtKB-KW"/>
</dbReference>
<dbReference type="GO" id="GO:0019836">
    <property type="term" value="P:symbiont-mediated hemolysis of host erythrocyte"/>
    <property type="evidence" value="ECO:0007669"/>
    <property type="project" value="InterPro"/>
</dbReference>
<dbReference type="InterPro" id="IPR012518">
    <property type="entry name" value="Antimicrobial15"/>
</dbReference>
<dbReference type="Pfam" id="PF08110">
    <property type="entry name" value="Antimicrobial15"/>
    <property type="match status" value="1"/>
</dbReference>
<evidence type="ECO:0000250" key="1">
    <source>
        <dbReference type="UniProtKB" id="P0DQJ8"/>
    </source>
</evidence>
<evidence type="ECO:0000269" key="2">
    <source>
    </source>
</evidence>
<evidence type="ECO:0000269" key="3">
    <source>
    </source>
</evidence>
<evidence type="ECO:0000303" key="4">
    <source>
    </source>
</evidence>
<evidence type="ECO:0000303" key="5">
    <source>
    </source>
</evidence>
<evidence type="ECO:0000305" key="6"/>
<evidence type="ECO:0000305" key="7">
    <source>
    </source>
</evidence>
<evidence type="ECO:0000305" key="8">
    <source>
    </source>
</evidence>
<evidence type="ECO:0007744" key="9">
    <source>
        <dbReference type="PDB" id="5U9S"/>
    </source>
</evidence>
<evidence type="ECO:0007744" key="10">
    <source>
        <dbReference type="PDB" id="5U9Y"/>
    </source>
</evidence>
<evidence type="ECO:0007744" key="11">
    <source>
        <dbReference type="PDB" id="5UA8"/>
    </source>
</evidence>
<evidence type="ECO:0007829" key="12">
    <source>
        <dbReference type="PDB" id="5U9S"/>
    </source>
</evidence>
<sequence>GVVDILKGAAKDIAGHLASKVMNKL</sequence>
<accession>C0HKF0</accession>
<accession>A0A1W2VMZ4</accession>
<keyword id="KW-0002">3D-structure</keyword>
<keyword id="KW-0027">Amidation</keyword>
<keyword id="KW-0878">Amphibian defense peptide</keyword>
<keyword id="KW-0044">Antibiotic</keyword>
<keyword id="KW-0929">Antimicrobial</keyword>
<keyword id="KW-0930">Antiviral protein</keyword>
<keyword id="KW-0903">Direct protein sequencing</keyword>
<keyword id="KW-0295">Fungicide</keyword>
<keyword id="KW-0964">Secreted</keyword>
<organism>
    <name type="scientific">Leptodactylus labyrinthicus</name>
    <name type="common">Labyrinth frog</name>
    <dbReference type="NCBI Taxonomy" id="326590"/>
    <lineage>
        <taxon>Eukaryota</taxon>
        <taxon>Metazoa</taxon>
        <taxon>Chordata</taxon>
        <taxon>Craniata</taxon>
        <taxon>Vertebrata</taxon>
        <taxon>Euteleostomi</taxon>
        <taxon>Amphibia</taxon>
        <taxon>Batrachia</taxon>
        <taxon>Anura</taxon>
        <taxon>Neobatrachia</taxon>
        <taxon>Hyloidea</taxon>
        <taxon>Leptodactylidae</taxon>
        <taxon>Leptodactylinae</taxon>
        <taxon>Leptodactylus</taxon>
    </lineage>
</organism>
<feature type="peptide" id="PRO_0000439884" description="Ocellatin-F1" evidence="2 3">
    <location>
        <begin position="1"/>
        <end position="25"/>
    </location>
</feature>
<feature type="modified residue" description="Leucine amide" evidence="3">
    <location>
        <position position="25"/>
    </location>
</feature>
<feature type="helix" evidence="12">
    <location>
        <begin position="3"/>
        <end position="24"/>
    </location>
</feature>
<proteinExistence type="evidence at protein level"/>
<name>OCEF1_LEPLB</name>
<reference key="1">
    <citation type="journal article" date="2015" name="J. Venom. Anim. Toxins Incl. Trop. Dis.">
        <title>Synergic effects between ocellatin-F1 and bufotenine on the inhibition of BHK-21 cellular infection by the rabies virus.</title>
        <authorList>
            <person name="Cunha Neto Rdos S."/>
            <person name="Vigerelli H."/>
            <person name="Jared C."/>
            <person name="Antoniazzi M.M."/>
            <person name="Chaves L.B."/>
            <person name="da Silva Ade C."/>
            <person name="Melo R.L."/>
            <person name="Sciani J.M."/>
            <person name="Pimenta D.C."/>
        </authorList>
    </citation>
    <scope>PROTEIN SEQUENCE</scope>
    <scope>FUNCTION</scope>
    <scope>SUBCELLULAR LOCATION</scope>
    <scope>MASS SPECTROMETRY</scope>
    <source>
        <tissue>Skin secretion</tissue>
    </source>
</reference>
<reference key="2">
    <citation type="journal article" date="2017" name="J. Venom. Anim. Toxins Incl. Trop. Dis.">
        <title>Ocellatin peptides from the skin secretion of the South American frog Leptodactylus labyrinthicus (Leptodactylidae): characterization, antimicrobial activities and membrane interactions.</title>
        <authorList>
            <person name="Gusmao K.A."/>
            <person name="Dos Santos D.M."/>
            <person name="Santos V.M."/>
            <person name="Cortes M.E."/>
            <person name="Reis P.V."/>
            <person name="Santos V.L."/>
            <person name="Pilo-Veloso D."/>
            <person name="Verly R.M."/>
            <person name="de Lima M.E."/>
            <person name="Resende J.M."/>
        </authorList>
    </citation>
    <scope>PROTEIN SEQUENCE</scope>
    <scope>FUNCTION</scope>
    <scope>SUBCELLULAR LOCATION</scope>
    <scope>MASS SPECTROMETRY</scope>
    <scope>AMIDATION AT LEU-25</scope>
    <source>
        <tissue>Skin secretion</tissue>
    </source>
</reference>
<reference evidence="9 10 11" key="3">
    <citation type="journal article" date="2018" name="Peptides">
        <title>NMR structures in different membrane environments of three ocellatin peptides isolated from Leptodactylus labyrinthicus.</title>
        <authorList>
            <person name="Gomes K.A.G.G."/>
            <person name="Dos Santos D.M."/>
            <person name="Santos V.M."/>
            <person name="Pilo-Veloso D."/>
            <person name="Mundim H.M."/>
            <person name="Rodrigues L.V."/>
            <person name="Liao L.M."/>
            <person name="Verly R.M."/>
            <person name="de Lima M.E."/>
            <person name="Resende J.M."/>
        </authorList>
    </citation>
    <scope>STRUCTURE BY NMR IN PRESENCE OF ANIONIC SDS MICELLES; ZWITTERIONIC DPC MICELLES AND TFE:H2O SOLUTION</scope>
</reference>